<sequence>MSSSANSLNALSFDNSYARLPTHFYQKVAQTPLEDAHLISFNGDVAEALGLNRSQLDPEELARYCGGGGALETGESIAMKYAGHQFGHYNPDLGDGRGLLLGEVVTADNRRLDLHLKGAGRTAYSRFGDGRAVLRSSIREYLVSAAMNSLGVSSTSALCLVGSEEYTMRNGMEPCAMVLRVTPCHIRFGHFEHFYYLGQHDDLKLLADYCIERYFPQLQEADNPYLAMFNEVRNRTADLVAQWQSYGFVHGVMNTDNMSIIGETFDYGPFTFLDSYDPNFISNKNDTAGRYAFKQQPGIALWNLSALAQALLPLIPLDDLKRSLDDFADLYSAAFYGKMSQRLGLTQQGADGSLRQLIDDLLTLFAANNTDMNRFMRALSRYDGNESSLSFMSDLSCDSRGFSEWKARFCKHVDSSDVTLADRTQAMLQVNPEYILRNYMLEEAIREAHQGDYLPVQNLLKIVKNPFNAQPGAERYAEAPPDWAGAICLTCSS</sequence>
<feature type="chain" id="PRO_0000271829" description="Protein nucleotidyltransferase YdiU">
    <location>
        <begin position="1"/>
        <end position="493"/>
    </location>
</feature>
<feature type="active site" description="Proton acceptor" evidence="1">
    <location>
        <position position="256"/>
    </location>
</feature>
<feature type="binding site" evidence="1">
    <location>
        <position position="94"/>
    </location>
    <ligand>
        <name>ATP</name>
        <dbReference type="ChEBI" id="CHEBI:30616"/>
    </ligand>
</feature>
<feature type="binding site" evidence="1">
    <location>
        <position position="96"/>
    </location>
    <ligand>
        <name>ATP</name>
        <dbReference type="ChEBI" id="CHEBI:30616"/>
    </ligand>
</feature>
<feature type="binding site" evidence="1">
    <location>
        <position position="97"/>
    </location>
    <ligand>
        <name>ATP</name>
        <dbReference type="ChEBI" id="CHEBI:30616"/>
    </ligand>
</feature>
<feature type="binding site" evidence="1">
    <location>
        <position position="117"/>
    </location>
    <ligand>
        <name>ATP</name>
        <dbReference type="ChEBI" id="CHEBI:30616"/>
    </ligand>
</feature>
<feature type="binding site" evidence="1">
    <location>
        <position position="129"/>
    </location>
    <ligand>
        <name>ATP</name>
        <dbReference type="ChEBI" id="CHEBI:30616"/>
    </ligand>
</feature>
<feature type="binding site" evidence="1">
    <location>
        <position position="130"/>
    </location>
    <ligand>
        <name>ATP</name>
        <dbReference type="ChEBI" id="CHEBI:30616"/>
    </ligand>
</feature>
<feature type="binding site" evidence="1">
    <location>
        <position position="180"/>
    </location>
    <ligand>
        <name>ATP</name>
        <dbReference type="ChEBI" id="CHEBI:30616"/>
    </ligand>
</feature>
<feature type="binding site" evidence="1">
    <location>
        <position position="187"/>
    </location>
    <ligand>
        <name>ATP</name>
        <dbReference type="ChEBI" id="CHEBI:30616"/>
    </ligand>
</feature>
<feature type="binding site" evidence="1">
    <location>
        <position position="257"/>
    </location>
    <ligand>
        <name>Mg(2+)</name>
        <dbReference type="ChEBI" id="CHEBI:18420"/>
    </ligand>
</feature>
<feature type="binding site" evidence="1">
    <location>
        <position position="266"/>
    </location>
    <ligand>
        <name>ATP</name>
        <dbReference type="ChEBI" id="CHEBI:30616"/>
    </ligand>
</feature>
<feature type="binding site" evidence="1">
    <location>
        <position position="266"/>
    </location>
    <ligand>
        <name>Mg(2+)</name>
        <dbReference type="ChEBI" id="CHEBI:18420"/>
    </ligand>
</feature>
<accession>Q2SAE6</accession>
<keyword id="KW-0067">ATP-binding</keyword>
<keyword id="KW-0460">Magnesium</keyword>
<keyword id="KW-0464">Manganese</keyword>
<keyword id="KW-0479">Metal-binding</keyword>
<keyword id="KW-0547">Nucleotide-binding</keyword>
<keyword id="KW-0548">Nucleotidyltransferase</keyword>
<keyword id="KW-1185">Reference proteome</keyword>
<keyword id="KW-0808">Transferase</keyword>
<name>SELO_HAHCH</name>
<proteinExistence type="inferred from homology"/>
<organism>
    <name type="scientific">Hahella chejuensis (strain KCTC 2396)</name>
    <dbReference type="NCBI Taxonomy" id="349521"/>
    <lineage>
        <taxon>Bacteria</taxon>
        <taxon>Pseudomonadati</taxon>
        <taxon>Pseudomonadota</taxon>
        <taxon>Gammaproteobacteria</taxon>
        <taxon>Oceanospirillales</taxon>
        <taxon>Hahellaceae</taxon>
        <taxon>Hahella</taxon>
    </lineage>
</organism>
<evidence type="ECO:0000255" key="1">
    <source>
        <dbReference type="HAMAP-Rule" id="MF_00692"/>
    </source>
</evidence>
<gene>
    <name evidence="1" type="primary">ydiU</name>
    <name evidence="1" type="synonym">selO</name>
    <name type="ordered locus">HCH_05725</name>
</gene>
<protein>
    <recommendedName>
        <fullName evidence="1">Protein nucleotidyltransferase YdiU</fullName>
        <ecNumber evidence="1">2.7.7.-</ecNumber>
    </recommendedName>
    <alternativeName>
        <fullName evidence="1">Protein adenylyltransferase YdiU</fullName>
        <ecNumber evidence="1">2.7.7.108</ecNumber>
    </alternativeName>
    <alternativeName>
        <fullName evidence="1">Protein uridylyltransferase YdiU</fullName>
        <ecNumber evidence="1">2.7.7.-</ecNumber>
    </alternativeName>
</protein>
<dbReference type="EC" id="2.7.7.-" evidence="1"/>
<dbReference type="EC" id="2.7.7.108" evidence="1"/>
<dbReference type="EMBL" id="CP000155">
    <property type="protein sequence ID" value="ABC32378.1"/>
    <property type="molecule type" value="Genomic_DNA"/>
</dbReference>
<dbReference type="RefSeq" id="WP_011399437.1">
    <property type="nucleotide sequence ID" value="NC_007645.1"/>
</dbReference>
<dbReference type="SMR" id="Q2SAE6"/>
<dbReference type="STRING" id="349521.HCH_05725"/>
<dbReference type="KEGG" id="hch:HCH_05725"/>
<dbReference type="eggNOG" id="COG0397">
    <property type="taxonomic scope" value="Bacteria"/>
</dbReference>
<dbReference type="HOGENOM" id="CLU_010245_4_0_6"/>
<dbReference type="OrthoDB" id="9776281at2"/>
<dbReference type="Proteomes" id="UP000000238">
    <property type="component" value="Chromosome"/>
</dbReference>
<dbReference type="GO" id="GO:0070733">
    <property type="term" value="F:AMPylase activity"/>
    <property type="evidence" value="ECO:0007669"/>
    <property type="project" value="TreeGrafter"/>
</dbReference>
<dbReference type="GO" id="GO:0005524">
    <property type="term" value="F:ATP binding"/>
    <property type="evidence" value="ECO:0007669"/>
    <property type="project" value="UniProtKB-UniRule"/>
</dbReference>
<dbReference type="GO" id="GO:0000287">
    <property type="term" value="F:magnesium ion binding"/>
    <property type="evidence" value="ECO:0007669"/>
    <property type="project" value="UniProtKB-UniRule"/>
</dbReference>
<dbReference type="HAMAP" id="MF_00692">
    <property type="entry name" value="YdiU_SelO"/>
    <property type="match status" value="1"/>
</dbReference>
<dbReference type="InterPro" id="IPR003846">
    <property type="entry name" value="SelO"/>
</dbReference>
<dbReference type="NCBIfam" id="NF000658">
    <property type="entry name" value="PRK00029.1"/>
    <property type="match status" value="1"/>
</dbReference>
<dbReference type="PANTHER" id="PTHR32057">
    <property type="entry name" value="PROTEIN ADENYLYLTRANSFERASE SELO, MITOCHONDRIAL"/>
    <property type="match status" value="1"/>
</dbReference>
<dbReference type="PANTHER" id="PTHR32057:SF14">
    <property type="entry name" value="PROTEIN ADENYLYLTRANSFERASE SELO, MITOCHONDRIAL"/>
    <property type="match status" value="1"/>
</dbReference>
<dbReference type="Pfam" id="PF02696">
    <property type="entry name" value="SelO"/>
    <property type="match status" value="1"/>
</dbReference>
<reference key="1">
    <citation type="journal article" date="2005" name="Nucleic Acids Res.">
        <title>Genomic blueprint of Hahella chejuensis, a marine microbe producing an algicidal agent.</title>
        <authorList>
            <person name="Jeong H."/>
            <person name="Yim J.H."/>
            <person name="Lee C."/>
            <person name="Choi S.-H."/>
            <person name="Park Y.K."/>
            <person name="Yoon S.H."/>
            <person name="Hur C.-G."/>
            <person name="Kang H.-Y."/>
            <person name="Kim D."/>
            <person name="Lee H.H."/>
            <person name="Park K.H."/>
            <person name="Park S.-H."/>
            <person name="Park H.-S."/>
            <person name="Lee H.K."/>
            <person name="Oh T.K."/>
            <person name="Kim J.F."/>
        </authorList>
    </citation>
    <scope>NUCLEOTIDE SEQUENCE [LARGE SCALE GENOMIC DNA]</scope>
    <source>
        <strain>KCTC 2396</strain>
    </source>
</reference>
<comment type="function">
    <text evidence="1">Nucleotidyltransferase involved in the post-translational modification of proteins. It can catalyze the addition of adenosine monophosphate (AMP) or uridine monophosphate (UMP) to a protein, resulting in modifications known as AMPylation and UMPylation.</text>
</comment>
<comment type="catalytic activity">
    <reaction evidence="1">
        <text>L-seryl-[protein] + ATP = 3-O-(5'-adenylyl)-L-seryl-[protein] + diphosphate</text>
        <dbReference type="Rhea" id="RHEA:58120"/>
        <dbReference type="Rhea" id="RHEA-COMP:9863"/>
        <dbReference type="Rhea" id="RHEA-COMP:15073"/>
        <dbReference type="ChEBI" id="CHEBI:29999"/>
        <dbReference type="ChEBI" id="CHEBI:30616"/>
        <dbReference type="ChEBI" id="CHEBI:33019"/>
        <dbReference type="ChEBI" id="CHEBI:142516"/>
        <dbReference type="EC" id="2.7.7.108"/>
    </reaction>
</comment>
<comment type="catalytic activity">
    <reaction evidence="1">
        <text>L-threonyl-[protein] + ATP = 3-O-(5'-adenylyl)-L-threonyl-[protein] + diphosphate</text>
        <dbReference type="Rhea" id="RHEA:54292"/>
        <dbReference type="Rhea" id="RHEA-COMP:11060"/>
        <dbReference type="Rhea" id="RHEA-COMP:13847"/>
        <dbReference type="ChEBI" id="CHEBI:30013"/>
        <dbReference type="ChEBI" id="CHEBI:30616"/>
        <dbReference type="ChEBI" id="CHEBI:33019"/>
        <dbReference type="ChEBI" id="CHEBI:138113"/>
        <dbReference type="EC" id="2.7.7.108"/>
    </reaction>
</comment>
<comment type="catalytic activity">
    <reaction evidence="1">
        <text>L-tyrosyl-[protein] + ATP = O-(5'-adenylyl)-L-tyrosyl-[protein] + diphosphate</text>
        <dbReference type="Rhea" id="RHEA:54288"/>
        <dbReference type="Rhea" id="RHEA-COMP:10136"/>
        <dbReference type="Rhea" id="RHEA-COMP:13846"/>
        <dbReference type="ChEBI" id="CHEBI:30616"/>
        <dbReference type="ChEBI" id="CHEBI:33019"/>
        <dbReference type="ChEBI" id="CHEBI:46858"/>
        <dbReference type="ChEBI" id="CHEBI:83624"/>
        <dbReference type="EC" id="2.7.7.108"/>
    </reaction>
</comment>
<comment type="catalytic activity">
    <reaction evidence="1">
        <text>L-histidyl-[protein] + UTP = N(tele)-(5'-uridylyl)-L-histidyl-[protein] + diphosphate</text>
        <dbReference type="Rhea" id="RHEA:83891"/>
        <dbReference type="Rhea" id="RHEA-COMP:9745"/>
        <dbReference type="Rhea" id="RHEA-COMP:20239"/>
        <dbReference type="ChEBI" id="CHEBI:29979"/>
        <dbReference type="ChEBI" id="CHEBI:33019"/>
        <dbReference type="ChEBI" id="CHEBI:46398"/>
        <dbReference type="ChEBI" id="CHEBI:233474"/>
    </reaction>
</comment>
<comment type="catalytic activity">
    <reaction evidence="1">
        <text>L-seryl-[protein] + UTP = O-(5'-uridylyl)-L-seryl-[protein] + diphosphate</text>
        <dbReference type="Rhea" id="RHEA:64604"/>
        <dbReference type="Rhea" id="RHEA-COMP:9863"/>
        <dbReference type="Rhea" id="RHEA-COMP:16635"/>
        <dbReference type="ChEBI" id="CHEBI:29999"/>
        <dbReference type="ChEBI" id="CHEBI:33019"/>
        <dbReference type="ChEBI" id="CHEBI:46398"/>
        <dbReference type="ChEBI" id="CHEBI:156051"/>
    </reaction>
</comment>
<comment type="catalytic activity">
    <reaction evidence="1">
        <text>L-tyrosyl-[protein] + UTP = O-(5'-uridylyl)-L-tyrosyl-[protein] + diphosphate</text>
        <dbReference type="Rhea" id="RHEA:83887"/>
        <dbReference type="Rhea" id="RHEA-COMP:10136"/>
        <dbReference type="Rhea" id="RHEA-COMP:20238"/>
        <dbReference type="ChEBI" id="CHEBI:33019"/>
        <dbReference type="ChEBI" id="CHEBI:46398"/>
        <dbReference type="ChEBI" id="CHEBI:46858"/>
        <dbReference type="ChEBI" id="CHEBI:90602"/>
    </reaction>
</comment>
<comment type="cofactor">
    <cofactor evidence="1">
        <name>Mg(2+)</name>
        <dbReference type="ChEBI" id="CHEBI:18420"/>
    </cofactor>
    <cofactor evidence="1">
        <name>Mn(2+)</name>
        <dbReference type="ChEBI" id="CHEBI:29035"/>
    </cofactor>
</comment>
<comment type="similarity">
    <text evidence="1">Belongs to the SELO family.</text>
</comment>